<proteinExistence type="inferred from homology"/>
<gene>
    <name evidence="1" type="primary">gM</name>
    <name type="ORF">BBRF3</name>
</gene>
<protein>
    <recommendedName>
        <fullName evidence="1">Envelope glycoprotein M</fullName>
        <shortName evidence="1">gM</shortName>
    </recommendedName>
</protein>
<keyword id="KW-1015">Disulfide bond</keyword>
<keyword id="KW-0325">Glycoprotein</keyword>
<keyword id="KW-1039">Host endosome</keyword>
<keyword id="KW-1040">Host Golgi apparatus</keyword>
<keyword id="KW-1043">Host membrane</keyword>
<keyword id="KW-1048">Host nucleus</keyword>
<keyword id="KW-0472">Membrane</keyword>
<keyword id="KW-1185">Reference proteome</keyword>
<keyword id="KW-0812">Transmembrane</keyword>
<keyword id="KW-1133">Transmembrane helix</keyword>
<keyword id="KW-0261">Viral envelope protein</keyword>
<keyword id="KW-0946">Virion</keyword>
<organismHost>
    <name type="scientific">Homo sapiens</name>
    <name type="common">Human</name>
    <dbReference type="NCBI Taxonomy" id="9606"/>
</organismHost>
<organism>
    <name type="scientific">Epstein-Barr virus (strain AG876)</name>
    <name type="common">HHV-4</name>
    <name type="synonym">Human herpesvirus 4</name>
    <dbReference type="NCBI Taxonomy" id="82830"/>
    <lineage>
        <taxon>Viruses</taxon>
        <taxon>Duplodnaviria</taxon>
        <taxon>Heunggongvirae</taxon>
        <taxon>Peploviricota</taxon>
        <taxon>Herviviricetes</taxon>
        <taxon>Herpesvirales</taxon>
        <taxon>Orthoherpesviridae</taxon>
        <taxon>Gammaherpesvirinae</taxon>
        <taxon>Lymphocryptovirus</taxon>
        <taxon>Lymphocryptovirus humangamma4</taxon>
        <taxon>Epstein-Barr virus (strain GD1)</taxon>
    </lineage>
</organism>
<evidence type="ECO:0000255" key="1">
    <source>
        <dbReference type="HAMAP-Rule" id="MF_04035"/>
    </source>
</evidence>
<evidence type="ECO:0000256" key="2">
    <source>
        <dbReference type="SAM" id="MobiDB-lite"/>
    </source>
</evidence>
<sequence>MKSSKNDTFVYRTWFKTLVVYFVMFVMSAVVPITAMFPNLGYPCYFNALVDYGALNLTNYNLAHHLTPTLYLEPPEMFVYITLVFIADCVAFIYYACGEVALIKARKKVSGLTDLSAWVSAVGSPTVLFLAILKLWSIQVFIQVLSYKHVFLSAFVYFLHFLASVLHACACVTRFSPVWVVKAQDNSIPQDTFLWWVVFYLKPIVTNLYLGCLALETLVFSLSVFLALGNSFYFMVGDMVLGAVNLFLVLPIFWYILTEVWLASFLRHNFGFYCGMFIASIILILPLVRYEAVFVSAKLHTTVAINVAIIPILCSVAMLIRICRIFKSMRQGTDYVPVSETVELELESEPRPRPSRTPSPGRNRRRSSTSSSSSRSTRRQRPVSTQALISSVLPMTTDSEEEIFP</sequence>
<comment type="function">
    <text evidence="1">Envelope glycoprotein important for virion assembly and egress. Plays a role in the correct incorporation of gH-gL into virion membrane. Directs the glycoprotein N (gN) to the host trans-Golgi network.</text>
</comment>
<comment type="subunit">
    <text evidence="1">Interacts (via N-terminus) with gN (via N-terminus). The gM-gN heterodimer forms the gCII complex.</text>
</comment>
<comment type="subcellular location">
    <subcellularLocation>
        <location evidence="1">Virion membrane</location>
        <topology evidence="1">Multi-pass membrane protein</topology>
    </subcellularLocation>
    <subcellularLocation>
        <location evidence="1">Host Golgi apparatus</location>
        <location evidence="1">Host trans-Golgi network</location>
    </subcellularLocation>
    <subcellularLocation>
        <location evidence="1">Host endosome membrane</location>
        <topology evidence="1">Multi-pass membrane protein</topology>
    </subcellularLocation>
    <subcellularLocation>
        <location evidence="1">Host nucleus inner membrane</location>
        <topology evidence="1">Multi-pass membrane protein</topology>
    </subcellularLocation>
    <text evidence="1">During virion morphogenesis, this protein accumulates in the trans-Golgi network where secondary envelopment occurs.</text>
</comment>
<comment type="similarity">
    <text evidence="1">Belongs to the herpesviridae glycoprotein M family.</text>
</comment>
<feature type="chain" id="PRO_0000375950" description="Envelope glycoprotein M">
    <location>
        <begin position="1"/>
        <end position="405"/>
    </location>
</feature>
<feature type="topological domain" description="Intravirion" evidence="1">
    <location>
        <begin position="1"/>
        <end position="17"/>
    </location>
</feature>
<feature type="transmembrane region" description="Helical" evidence="1">
    <location>
        <begin position="18"/>
        <end position="38"/>
    </location>
</feature>
<feature type="topological domain" description="Virion surface" evidence="1">
    <location>
        <begin position="39"/>
        <end position="76"/>
    </location>
</feature>
<feature type="transmembrane region" description="Helical" evidence="1">
    <location>
        <begin position="77"/>
        <end position="97"/>
    </location>
</feature>
<feature type="topological domain" description="Intravirion" evidence="1">
    <location>
        <begin position="98"/>
        <end position="121"/>
    </location>
</feature>
<feature type="transmembrane region" description="Helical" evidence="1">
    <location>
        <begin position="122"/>
        <end position="142"/>
    </location>
</feature>
<feature type="topological domain" description="Virion surface" evidence="1">
    <location>
        <begin position="143"/>
        <end position="149"/>
    </location>
</feature>
<feature type="transmembrane region" description="Helical" evidence="1">
    <location>
        <begin position="150"/>
        <end position="170"/>
    </location>
</feature>
<feature type="topological domain" description="Intravirion" evidence="1">
    <location>
        <begin position="171"/>
        <end position="192"/>
    </location>
</feature>
<feature type="transmembrane region" description="Helical" evidence="1">
    <location>
        <begin position="193"/>
        <end position="215"/>
    </location>
</feature>
<feature type="topological domain" description="Virion surface" evidence="1">
    <location>
        <begin position="216"/>
        <end position="245"/>
    </location>
</feature>
<feature type="transmembrane region" description="Helical" evidence="1">
    <location>
        <begin position="246"/>
        <end position="266"/>
    </location>
</feature>
<feature type="topological domain" description="Intravirion" evidence="1">
    <location>
        <position position="267"/>
    </location>
</feature>
<feature type="transmembrane region" description="Helical" evidence="1">
    <location>
        <begin position="268"/>
        <end position="288"/>
    </location>
</feature>
<feature type="topological domain" description="Virion surface" evidence="1">
    <location>
        <begin position="289"/>
        <end position="299"/>
    </location>
</feature>
<feature type="transmembrane region" description="Helical" evidence="1">
    <location>
        <begin position="300"/>
        <end position="320"/>
    </location>
</feature>
<feature type="topological domain" description="Intravirion" evidence="1">
    <location>
        <begin position="321"/>
        <end position="405"/>
    </location>
</feature>
<feature type="region of interest" description="Disordered" evidence="2">
    <location>
        <begin position="346"/>
        <end position="405"/>
    </location>
</feature>
<feature type="compositionally biased region" description="Polar residues" evidence="2">
    <location>
        <begin position="386"/>
        <end position="397"/>
    </location>
</feature>
<feature type="disulfide bond" description="Interchain (with gN)" evidence="1">
    <location>
        <position position="44"/>
    </location>
</feature>
<dbReference type="EMBL" id="DQ279927">
    <property type="protein sequence ID" value="ABB89259.1"/>
    <property type="molecule type" value="Genomic_DNA"/>
</dbReference>
<dbReference type="RefSeq" id="YP_001129479.1">
    <property type="nucleotide sequence ID" value="NC_009334.1"/>
</dbReference>
<dbReference type="KEGG" id="vg:5176222"/>
<dbReference type="Proteomes" id="UP000007639">
    <property type="component" value="Genome"/>
</dbReference>
<dbReference type="GO" id="GO:0044175">
    <property type="term" value="C:host cell endosome membrane"/>
    <property type="evidence" value="ECO:0007669"/>
    <property type="project" value="UniProtKB-SubCell"/>
</dbReference>
<dbReference type="GO" id="GO:0044177">
    <property type="term" value="C:host cell Golgi apparatus"/>
    <property type="evidence" value="ECO:0007669"/>
    <property type="project" value="UniProtKB-SubCell"/>
</dbReference>
<dbReference type="GO" id="GO:0044201">
    <property type="term" value="C:host cell nuclear inner membrane"/>
    <property type="evidence" value="ECO:0007669"/>
    <property type="project" value="UniProtKB-SubCell"/>
</dbReference>
<dbReference type="GO" id="GO:0016020">
    <property type="term" value="C:membrane"/>
    <property type="evidence" value="ECO:0007669"/>
    <property type="project" value="UniProtKB-KW"/>
</dbReference>
<dbReference type="GO" id="GO:0019031">
    <property type="term" value="C:viral envelope"/>
    <property type="evidence" value="ECO:0007669"/>
    <property type="project" value="UniProtKB-KW"/>
</dbReference>
<dbReference type="GO" id="GO:0055036">
    <property type="term" value="C:virion membrane"/>
    <property type="evidence" value="ECO:0007669"/>
    <property type="project" value="UniProtKB-SubCell"/>
</dbReference>
<dbReference type="HAMAP" id="MF_04035">
    <property type="entry name" value="HSV_GM"/>
    <property type="match status" value="1"/>
</dbReference>
<dbReference type="InterPro" id="IPR000785">
    <property type="entry name" value="Herpes_glycop_M"/>
</dbReference>
<dbReference type="Pfam" id="PF01528">
    <property type="entry name" value="Herpes_glycop"/>
    <property type="match status" value="1"/>
</dbReference>
<dbReference type="PRINTS" id="PR00333">
    <property type="entry name" value="HSVINTEGRLMP"/>
</dbReference>
<reference key="1">
    <citation type="journal article" date="2006" name="Virology">
        <title>The genome of Epstein-Barr virus type 2 strain AG876.</title>
        <authorList>
            <person name="Dolan A."/>
            <person name="Addison C."/>
            <person name="Gatherer D."/>
            <person name="Davison A.J."/>
            <person name="McGeoch D.J."/>
        </authorList>
    </citation>
    <scope>NUCLEOTIDE SEQUENCE [LARGE SCALE GENOMIC DNA]</scope>
</reference>
<name>GM_EBVA8</name>
<accession>Q1HVE9</accession>